<comment type="function">
    <text evidence="1">Required for survival at high temperature during stationary phase.</text>
</comment>
<comment type="induction">
    <text evidence="1">During stationary phase.</text>
</comment>
<comment type="sequence caution" evidence="2">
    <conflict type="erroneous initiation">
        <sequence resource="EMBL-CDS" id="AAB60288"/>
    </conflict>
</comment>
<comment type="sequence caution" evidence="2">
    <conflict type="erroneous initiation">
        <sequence resource="EMBL-CDS" id="CAA87812"/>
    </conflict>
</comment>
<dbReference type="EMBL" id="Z47815">
    <property type="protein sequence ID" value="CAA87812.1"/>
    <property type="status" value="ALT_INIT"/>
    <property type="molecule type" value="Genomic_DNA"/>
</dbReference>
<dbReference type="EMBL" id="U22341">
    <property type="protein sequence ID" value="AAB60288.1"/>
    <property type="status" value="ALT_INIT"/>
    <property type="molecule type" value="Genomic_DNA"/>
</dbReference>
<dbReference type="EMBL" id="BK006946">
    <property type="protein sequence ID" value="DAA10089.1"/>
    <property type="molecule type" value="Genomic_DNA"/>
</dbReference>
<dbReference type="PIR" id="S50919">
    <property type="entry name" value="S50919"/>
</dbReference>
<dbReference type="RefSeq" id="NP_013916.2">
    <property type="nucleotide sequence ID" value="NM_001182697.1"/>
</dbReference>
<dbReference type="BioGRID" id="35369">
    <property type="interactions" value="45"/>
</dbReference>
<dbReference type="FunCoup" id="P42933">
    <property type="interactions" value="92"/>
</dbReference>
<dbReference type="MINT" id="P42933"/>
<dbReference type="STRING" id="4932.YMR191W"/>
<dbReference type="iPTMnet" id="P42933"/>
<dbReference type="PaxDb" id="4932-YMR191W"/>
<dbReference type="PeptideAtlas" id="P42933"/>
<dbReference type="EnsemblFungi" id="YMR191W_mRNA">
    <property type="protein sequence ID" value="YMR191W"/>
    <property type="gene ID" value="YMR191W"/>
</dbReference>
<dbReference type="GeneID" id="855229"/>
<dbReference type="KEGG" id="sce:YMR191W"/>
<dbReference type="AGR" id="SGD:S000004803"/>
<dbReference type="SGD" id="S000004803">
    <property type="gene designation" value="SPG5"/>
</dbReference>
<dbReference type="VEuPathDB" id="FungiDB:YMR191W"/>
<dbReference type="eggNOG" id="ENOG502S2SB">
    <property type="taxonomic scope" value="Eukaryota"/>
</dbReference>
<dbReference type="HOGENOM" id="CLU_048937_0_0_1"/>
<dbReference type="InParanoid" id="P42933"/>
<dbReference type="OMA" id="SLRCFFN"/>
<dbReference type="OrthoDB" id="416253at2759"/>
<dbReference type="BioCyc" id="YEAST:G3O-32878-MONOMER"/>
<dbReference type="BioGRID-ORCS" id="855229">
    <property type="hits" value="4 hits in 10 CRISPR screens"/>
</dbReference>
<dbReference type="PRO" id="PR:P42933"/>
<dbReference type="Proteomes" id="UP000002311">
    <property type="component" value="Chromosome XIII"/>
</dbReference>
<dbReference type="RNAct" id="P42933">
    <property type="molecule type" value="protein"/>
</dbReference>
<dbReference type="GO" id="GO:0070628">
    <property type="term" value="F:proteasome binding"/>
    <property type="evidence" value="ECO:0000314"/>
    <property type="project" value="SGD"/>
</dbReference>
<dbReference type="GO" id="GO:0043248">
    <property type="term" value="P:proteasome assembly"/>
    <property type="evidence" value="ECO:0000315"/>
    <property type="project" value="SGD"/>
</dbReference>
<dbReference type="InterPro" id="IPR038816">
    <property type="entry name" value="Stationary_phase_5"/>
</dbReference>
<dbReference type="PANTHER" id="PTHR42342">
    <property type="entry name" value="STATIONARY PHASE PROTEIN 5"/>
    <property type="match status" value="1"/>
</dbReference>
<dbReference type="PANTHER" id="PTHR42342:SF1">
    <property type="entry name" value="STATIONARY PHASE PROTEIN 5"/>
    <property type="match status" value="1"/>
</dbReference>
<feature type="chain" id="PRO_0000203324" description="Stationary phase protein 5">
    <location>
        <begin position="1"/>
        <end position="373"/>
    </location>
</feature>
<feature type="sequence conflict" description="In Ref. 3; AAB60288." evidence="2" ref="3">
    <original>N</original>
    <variation>Y</variation>
    <location>
        <position position="43"/>
    </location>
</feature>
<feature type="sequence conflict" description="In Ref. 3; AAB60288." evidence="2" ref="3">
    <original>FVTW</original>
    <variation>LALG</variation>
    <location>
        <begin position="47"/>
        <end position="50"/>
    </location>
</feature>
<organism>
    <name type="scientific">Saccharomyces cerevisiae (strain ATCC 204508 / S288c)</name>
    <name type="common">Baker's yeast</name>
    <dbReference type="NCBI Taxonomy" id="559292"/>
    <lineage>
        <taxon>Eukaryota</taxon>
        <taxon>Fungi</taxon>
        <taxon>Dikarya</taxon>
        <taxon>Ascomycota</taxon>
        <taxon>Saccharomycotina</taxon>
        <taxon>Saccharomycetes</taxon>
        <taxon>Saccharomycetales</taxon>
        <taxon>Saccharomycetaceae</taxon>
        <taxon>Saccharomyces</taxon>
    </lineage>
</organism>
<protein>
    <recommendedName>
        <fullName>Stationary phase protein 5</fullName>
    </recommendedName>
</protein>
<gene>
    <name type="primary">SPG5</name>
    <name type="ordered locus">YMR191W</name>
    <name type="ORF">YM9646.03</name>
</gene>
<sequence length="373" mass="42163">MAVGGNNWSMWLRMSRVHLRQITKSLDRTLISLSHGNFSHQYNRNIFVTWWKSLFEASTAFRRASGLTVSPLTRRGIARFDHFRPVPNVSKFASFPRVPKGAPRGLFTNWNMTTSKRLLGQRAYSTSSIKFTQEAVNNMTISLRCFFNSLGGLNQCSHSNSCKAYQNASNVTSKQDHVQPVALKKLSQKDINFIRNLELFKIMKTQNEVVDETSAYYMEKPGSYIEFTISEFNVNGTFSAPLSFLDPSLLADLDEMIRNYKYELKSIYSSVDMILQNYGSLPITFHRNKIRIHFPNSTVVETEKLIAGLNIATGVIYADTSPDISLEGTNLNALVNVDNSGSVWSFVKEPSFPSRSAFSPILSDASYDTYELV</sequence>
<evidence type="ECO:0000269" key="1">
    <source>
    </source>
</evidence>
<evidence type="ECO:0000305" key="2"/>
<name>SPG5_YEAST</name>
<keyword id="KW-1185">Reference proteome</keyword>
<accession>P42933</accession>
<accession>D6W015</accession>
<reference key="1">
    <citation type="journal article" date="1997" name="Nature">
        <title>The nucleotide sequence of Saccharomyces cerevisiae chromosome XIII.</title>
        <authorList>
            <person name="Bowman S."/>
            <person name="Churcher C.M."/>
            <person name="Badcock K."/>
            <person name="Brown D."/>
            <person name="Chillingworth T."/>
            <person name="Connor R."/>
            <person name="Dedman K."/>
            <person name="Devlin K."/>
            <person name="Gentles S."/>
            <person name="Hamlin N."/>
            <person name="Hunt S."/>
            <person name="Jagels K."/>
            <person name="Lye G."/>
            <person name="Moule S."/>
            <person name="Odell C."/>
            <person name="Pearson D."/>
            <person name="Rajandream M.A."/>
            <person name="Rice P."/>
            <person name="Skelton J."/>
            <person name="Walsh S.V."/>
            <person name="Whitehead S."/>
            <person name="Barrell B.G."/>
        </authorList>
    </citation>
    <scope>NUCLEOTIDE SEQUENCE [LARGE SCALE GENOMIC DNA]</scope>
    <source>
        <strain>ATCC 204508 / S288c</strain>
    </source>
</reference>
<reference key="2">
    <citation type="journal article" date="2014" name="G3 (Bethesda)">
        <title>The reference genome sequence of Saccharomyces cerevisiae: Then and now.</title>
        <authorList>
            <person name="Engel S.R."/>
            <person name="Dietrich F.S."/>
            <person name="Fisk D.G."/>
            <person name="Binkley G."/>
            <person name="Balakrishnan R."/>
            <person name="Costanzo M.C."/>
            <person name="Dwight S.S."/>
            <person name="Hitz B.C."/>
            <person name="Karra K."/>
            <person name="Nash R.S."/>
            <person name="Weng S."/>
            <person name="Wong E.D."/>
            <person name="Lloyd P."/>
            <person name="Skrzypek M.S."/>
            <person name="Miyasato S.R."/>
            <person name="Simison M."/>
            <person name="Cherry J.M."/>
        </authorList>
    </citation>
    <scope>GENOME REANNOTATION</scope>
    <source>
        <strain>ATCC 204508 / S288c</strain>
    </source>
</reference>
<reference key="3">
    <citation type="journal article" date="1994" name="Mol. Cell. Biol.">
        <title>The yeast type I topoisomerase Top3 interacts with Sgs1, a DNA helicase homolog: a potential eukaryotic reverse gyrase.</title>
        <authorList>
            <person name="Gangloff S."/>
            <person name="McDonald J.P."/>
            <person name="Bendixen C."/>
            <person name="Arthur L."/>
            <person name="Rothstein R."/>
        </authorList>
    </citation>
    <scope>NUCLEOTIDE SEQUENCE [GENOMIC DNA] OF 1-164</scope>
    <source>
        <strain>ATCC 200060 / W303</strain>
    </source>
</reference>
<reference key="4">
    <citation type="journal article" date="2003" name="Nature">
        <title>Sequencing and comparison of yeast species to identify genes and regulatory elements.</title>
        <authorList>
            <person name="Kellis M."/>
            <person name="Patterson N."/>
            <person name="Endrizzi M."/>
            <person name="Birren B.W."/>
            <person name="Lander E.S."/>
        </authorList>
    </citation>
    <scope>IDENTIFICATION OF PROBABLE INITIATION SITE</scope>
</reference>
<reference key="5">
    <citation type="journal article" date="2004" name="Mol. Biol. Cell">
        <title>Genomic analysis of stationary-phase and exit in Saccharomyces cerevisiae: gene expression and identification of novel essential genes.</title>
        <authorList>
            <person name="Martinez M.J."/>
            <person name="Roy S."/>
            <person name="Archuletta A.B."/>
            <person name="Wentzell P.D."/>
            <person name="Anna-Arriola S.S."/>
            <person name="Rodriguez A.L."/>
            <person name="Aragon A.D."/>
            <person name="Quinones G.A."/>
            <person name="Allen C."/>
            <person name="Werner-Washburne M."/>
        </authorList>
    </citation>
    <scope>FUNCTION</scope>
    <scope>INDUCTION</scope>
</reference>
<proteinExistence type="evidence at transcript level"/>